<protein>
    <recommendedName>
        <fullName evidence="5">Flavonoid-6-hydroxylase</fullName>
        <shortName evidence="5">ObF6H</shortName>
        <ecNumber evidence="3">1.14.14.-</ecNumber>
    </recommendedName>
    <alternativeName>
        <fullName evidence="5">CYP450 monooxygenase 82D33</fullName>
    </alternativeName>
    <alternativeName>
        <fullName evidence="5">Cytochrome P450 82D33</fullName>
    </alternativeName>
</protein>
<evidence type="ECO:0000250" key="1">
    <source>
        <dbReference type="UniProtKB" id="Q94IP1"/>
    </source>
</evidence>
<evidence type="ECO:0000255" key="2"/>
<evidence type="ECO:0000269" key="3">
    <source>
    </source>
</evidence>
<evidence type="ECO:0000269" key="4">
    <source>
    </source>
</evidence>
<evidence type="ECO:0000303" key="5">
    <source>
    </source>
</evidence>
<evidence type="ECO:0000303" key="6">
    <source>
    </source>
</evidence>
<evidence type="ECO:0000305" key="7"/>
<organism>
    <name type="scientific">Ocimum basilicum</name>
    <name type="common">Sweet basil</name>
    <dbReference type="NCBI Taxonomy" id="39350"/>
    <lineage>
        <taxon>Eukaryota</taxon>
        <taxon>Viridiplantae</taxon>
        <taxon>Streptophyta</taxon>
        <taxon>Embryophyta</taxon>
        <taxon>Tracheophyta</taxon>
        <taxon>Spermatophyta</taxon>
        <taxon>Magnoliopsida</taxon>
        <taxon>eudicotyledons</taxon>
        <taxon>Gunneridae</taxon>
        <taxon>Pentapetalae</taxon>
        <taxon>asterids</taxon>
        <taxon>lamiids</taxon>
        <taxon>Lamiales</taxon>
        <taxon>Lamiaceae</taxon>
        <taxon>Nepetoideae</taxon>
        <taxon>Ocimeae</taxon>
        <taxon>Ociminae</taxon>
        <taxon>Ocimum</taxon>
    </lineage>
</organism>
<feature type="chain" id="PRO_0000456926" description="Flavonoid-6-hydroxylase">
    <location>
        <begin position="1"/>
        <end position="534"/>
    </location>
</feature>
<feature type="transmembrane region" description="Helical" evidence="2">
    <location>
        <begin position="3"/>
        <end position="23"/>
    </location>
</feature>
<feature type="binding site" description="axial binding residue" evidence="1">
    <location>
        <position position="467"/>
    </location>
    <ligand>
        <name>heme</name>
        <dbReference type="ChEBI" id="CHEBI:30413"/>
    </ligand>
    <ligandPart>
        <name>Fe</name>
        <dbReference type="ChEBI" id="CHEBI:18248"/>
    </ligandPart>
</feature>
<proteinExistence type="evidence at protein level"/>
<gene>
    <name evidence="5" type="primary">F6H</name>
    <name evidence="5" type="synonym">CYP82D33</name>
</gene>
<name>F6H_OCIBA</name>
<reference key="1">
    <citation type="journal article" date="2013" name="J. Biol. Chem.">
        <title>The roles of a flavone-6-hydroxylase and 7-O-demethylation in the flavone biosynthetic network of sweet basil.</title>
        <authorList>
            <person name="Berim A."/>
            <person name="Gang D.R."/>
        </authorList>
    </citation>
    <scope>NUCLEOTIDE SEQUENCE [MRNA]</scope>
    <scope>FUNCTION</scope>
    <scope>CATALYTIC ACTIVITY</scope>
    <scope>BIOPHYSICOCHEMICAL PROPERTIES</scope>
    <scope>TISSUE SPECIFICITY</scope>
    <scope>DEVELOPMENTAL STAGE</scope>
</reference>
<reference key="2">
    <citation type="journal article" date="2018" name="Int. J. Biol. Macromol.">
        <title>Nevadensin is a naturally occurring selective inhibitor of human carboxylesterase 1.</title>
        <authorList>
            <person name="Wang Y.-Q."/>
            <person name="Weng Z.-M."/>
            <person name="Dou T.-Y."/>
            <person name="Hou J."/>
            <person name="Wang D.-D."/>
            <person name="Ding L.-L."/>
            <person name="Zou L.-W."/>
            <person name="Yu Y."/>
            <person name="Chen J."/>
            <person name="Tang H."/>
            <person name="Ge G.-B."/>
        </authorList>
    </citation>
    <scope>BIOTECHNOLOGY</scope>
</reference>
<reference key="3">
    <citation type="journal article" date="2019" name="Nat. Prod. Rep.">
        <title>Non-volatile natural products in plant glandular trichomes: chemistry, biological activities and biosynthesis.</title>
        <authorList>
            <person name="Liu Y."/>
            <person name="Jing S.-X."/>
            <person name="Luo S.-H."/>
            <person name="Li S.-H."/>
        </authorList>
    </citation>
    <scope>PATHWAY</scope>
    <scope>REVIEW</scope>
</reference>
<comment type="function">
    <text evidence="3">Hydroxylase involved in the biosynthesis of polymethoxylated flavonoids natural products such as nevadensin and salvigenin, aroma compounds which contribute to the flavor of sweet basil, and exhibit pharmacological activities such as anti-allergic, anti-oxidant, antibacterial, anti-proliferative, and anti-inflammatory effects (PubMed:23184958). Catalyzes the 6-hydroxylation of 7-O-methylated precursors such as the conversion of genkwanin (GENK) to scutellarein-7-methyl ether (SCU7Me) (PubMed:23184958). Can also use, with a lower efficiency, apigenin-7,4'-dimethyl ether (AdM), naringenin-7-methyl ether (SAK) and naringenin-7,4'-dimethyl ether (NdM) as substrates (PubMed:23184958).</text>
</comment>
<comment type="catalytic activity">
    <reaction evidence="3">
        <text>genkwanin + reduced [NADPH--hemoprotein reductase] + O2 = scutellarein 7-methyl ether + oxidized [NADPH--hemoprotein reductase] + H2O</text>
        <dbReference type="Rhea" id="RHEA:73427"/>
        <dbReference type="Rhea" id="RHEA-COMP:11964"/>
        <dbReference type="Rhea" id="RHEA-COMP:11965"/>
        <dbReference type="ChEBI" id="CHEBI:15377"/>
        <dbReference type="ChEBI" id="CHEBI:15379"/>
        <dbReference type="ChEBI" id="CHEBI:57618"/>
        <dbReference type="ChEBI" id="CHEBI:58210"/>
        <dbReference type="ChEBI" id="CHEBI:192700"/>
        <dbReference type="ChEBI" id="CHEBI:192701"/>
    </reaction>
    <physiologicalReaction direction="left-to-right" evidence="3">
        <dbReference type="Rhea" id="RHEA:73428"/>
    </physiologicalReaction>
</comment>
<comment type="catalytic activity">
    <reaction evidence="3">
        <text>(2S)-sakuranetin + reduced [NADPH--hemoprotein reductase] + O2 = (2S)-7-methylcarthamidin + oxidized [NADPH--hemoprotein reductase] + H2O + H(+)</text>
        <dbReference type="Rhea" id="RHEA:73431"/>
        <dbReference type="Rhea" id="RHEA-COMP:11964"/>
        <dbReference type="Rhea" id="RHEA-COMP:11965"/>
        <dbReference type="ChEBI" id="CHEBI:15377"/>
        <dbReference type="ChEBI" id="CHEBI:15378"/>
        <dbReference type="ChEBI" id="CHEBI:15379"/>
        <dbReference type="ChEBI" id="CHEBI:28927"/>
        <dbReference type="ChEBI" id="CHEBI:57618"/>
        <dbReference type="ChEBI" id="CHEBI:58210"/>
        <dbReference type="ChEBI" id="CHEBI:192815"/>
    </reaction>
    <physiologicalReaction direction="left-to-right" evidence="3">
        <dbReference type="Rhea" id="RHEA:73432"/>
    </physiologicalReaction>
</comment>
<comment type="catalytic activity">
    <reaction evidence="3">
        <text>apigenin 4',7-dimethyl ether + reduced [NADPH--hemoprotein reductase] + O2 = ladanein + oxidized [NADPH--hemoprotein reductase] + H2O + H(+)</text>
        <dbReference type="Rhea" id="RHEA:73435"/>
        <dbReference type="Rhea" id="RHEA-COMP:11964"/>
        <dbReference type="Rhea" id="RHEA-COMP:11965"/>
        <dbReference type="ChEBI" id="CHEBI:2769"/>
        <dbReference type="ChEBI" id="CHEBI:15377"/>
        <dbReference type="ChEBI" id="CHEBI:15378"/>
        <dbReference type="ChEBI" id="CHEBI:15379"/>
        <dbReference type="ChEBI" id="CHEBI:57618"/>
        <dbReference type="ChEBI" id="CHEBI:58210"/>
        <dbReference type="ChEBI" id="CHEBI:192702"/>
    </reaction>
    <physiologicalReaction direction="left-to-right" evidence="3">
        <dbReference type="Rhea" id="RHEA:73436"/>
    </physiologicalReaction>
</comment>
<comment type="catalytic activity">
    <reaction evidence="3">
        <text>(2S)-naringenin 4',7-dimethyl ether + reduced [NADPH--hemoprotein reductase] + O2 = (2S)-carthamidin-4',7-dimethyl ether + oxidized [NADPH--hemoprotein reductase] + H2O + H(+)</text>
        <dbReference type="Rhea" id="RHEA:73439"/>
        <dbReference type="Rhea" id="RHEA-COMP:11964"/>
        <dbReference type="Rhea" id="RHEA-COMP:11965"/>
        <dbReference type="ChEBI" id="CHEBI:15377"/>
        <dbReference type="ChEBI" id="CHEBI:15378"/>
        <dbReference type="ChEBI" id="CHEBI:15379"/>
        <dbReference type="ChEBI" id="CHEBI:57618"/>
        <dbReference type="ChEBI" id="CHEBI:58210"/>
        <dbReference type="ChEBI" id="CHEBI:192816"/>
        <dbReference type="ChEBI" id="CHEBI:192817"/>
    </reaction>
    <physiologicalReaction direction="left-to-right" evidence="3">
        <dbReference type="Rhea" id="RHEA:73440"/>
    </physiologicalReaction>
</comment>
<comment type="cofactor">
    <cofactor evidence="1">
        <name>heme</name>
        <dbReference type="ChEBI" id="CHEBI:30413"/>
    </cofactor>
</comment>
<comment type="biophysicochemical properties">
    <kinetics>
        <KM evidence="3">0.2 uM for genkwanin</KM>
        <KM evidence="3">1.29 uM for naringenin-7-methyl ether</KM>
        <KM evidence="3">0.15 uM for apigenin-7,4'-dimethyl ether</KM>
        <text evidence="3">kcat is 4.97 sec(-1) with genkwanin as substrate (PubMed:23184958). kcat is 3.25 sec(-1) with naringenin-7-methyl ether as substrate (PubMed:23184958). kcat is 1.64 sec(-1) with apigenin-7,4'-dimethyl ether as substrate (PubMed:23184958).</text>
    </kinetics>
</comment>
<comment type="pathway">
    <text evidence="6">Flavonoid metabolism.</text>
</comment>
<comment type="subcellular location">
    <subcellularLocation>
        <location evidence="2">Membrane</location>
        <topology evidence="2">Single-pass membrane protein</topology>
    </subcellularLocation>
</comment>
<comment type="tissue specificity">
    <text evidence="3">Expressed in leaves.</text>
</comment>
<comment type="developmental stage">
    <text evidence="3">Accumulates in young leaves but fades out during leaves aging.</text>
</comment>
<comment type="biotechnology">
    <text evidence="4">Nevadensin is a selective inhibitor of human carboxylesterase 1 (hCE-1), a key enzyme responsible for the hydrolysis of a wide range of endogenous and xenobiotic esters.</text>
</comment>
<comment type="similarity">
    <text evidence="7">Belongs to the cytochrome P450 family.</text>
</comment>
<keyword id="KW-0349">Heme</keyword>
<keyword id="KW-0408">Iron</keyword>
<keyword id="KW-0472">Membrane</keyword>
<keyword id="KW-0479">Metal-binding</keyword>
<keyword id="KW-0503">Monooxygenase</keyword>
<keyword id="KW-0560">Oxidoreductase</keyword>
<keyword id="KW-0812">Transmembrane</keyword>
<keyword id="KW-1133">Transmembrane helix</keyword>
<dbReference type="EC" id="1.14.14.-" evidence="3"/>
<dbReference type="EMBL" id="JX162212">
    <property type="protein sequence ID" value="AGF30364.1"/>
    <property type="molecule type" value="mRNA"/>
</dbReference>
<dbReference type="SMR" id="M1KXD0"/>
<dbReference type="BioCyc" id="MetaCyc:MONOMER-18141"/>
<dbReference type="GO" id="GO:0016020">
    <property type="term" value="C:membrane"/>
    <property type="evidence" value="ECO:0007669"/>
    <property type="project" value="UniProtKB-SubCell"/>
</dbReference>
<dbReference type="GO" id="GO:0020037">
    <property type="term" value="F:heme binding"/>
    <property type="evidence" value="ECO:0007669"/>
    <property type="project" value="InterPro"/>
</dbReference>
<dbReference type="GO" id="GO:0005506">
    <property type="term" value="F:iron ion binding"/>
    <property type="evidence" value="ECO:0007669"/>
    <property type="project" value="InterPro"/>
</dbReference>
<dbReference type="GO" id="GO:0004497">
    <property type="term" value="F:monooxygenase activity"/>
    <property type="evidence" value="ECO:0007669"/>
    <property type="project" value="UniProtKB-KW"/>
</dbReference>
<dbReference type="GO" id="GO:0016705">
    <property type="term" value="F:oxidoreductase activity, acting on paired donors, with incorporation or reduction of molecular oxygen"/>
    <property type="evidence" value="ECO:0007669"/>
    <property type="project" value="InterPro"/>
</dbReference>
<dbReference type="CDD" id="cd20654">
    <property type="entry name" value="CYP82"/>
    <property type="match status" value="1"/>
</dbReference>
<dbReference type="FunFam" id="1.10.630.10:FF:000026">
    <property type="entry name" value="Cytochrome P450 82C4"/>
    <property type="match status" value="1"/>
</dbReference>
<dbReference type="Gene3D" id="1.10.630.10">
    <property type="entry name" value="Cytochrome P450"/>
    <property type="match status" value="1"/>
</dbReference>
<dbReference type="InterPro" id="IPR001128">
    <property type="entry name" value="Cyt_P450"/>
</dbReference>
<dbReference type="InterPro" id="IPR017972">
    <property type="entry name" value="Cyt_P450_CS"/>
</dbReference>
<dbReference type="InterPro" id="IPR002401">
    <property type="entry name" value="Cyt_P450_E_grp-I"/>
</dbReference>
<dbReference type="InterPro" id="IPR036396">
    <property type="entry name" value="Cyt_P450_sf"/>
</dbReference>
<dbReference type="InterPro" id="IPR050651">
    <property type="entry name" value="Plant_Cytochrome_P450_Monoox"/>
</dbReference>
<dbReference type="PANTHER" id="PTHR47947:SF39">
    <property type="entry name" value="CYTOCHROME P450"/>
    <property type="match status" value="1"/>
</dbReference>
<dbReference type="PANTHER" id="PTHR47947">
    <property type="entry name" value="CYTOCHROME P450 82C3-RELATED"/>
    <property type="match status" value="1"/>
</dbReference>
<dbReference type="Pfam" id="PF00067">
    <property type="entry name" value="p450"/>
    <property type="match status" value="1"/>
</dbReference>
<dbReference type="PRINTS" id="PR00463">
    <property type="entry name" value="EP450I"/>
</dbReference>
<dbReference type="PRINTS" id="PR00385">
    <property type="entry name" value="P450"/>
</dbReference>
<dbReference type="SUPFAM" id="SSF48264">
    <property type="entry name" value="Cytochrome P450"/>
    <property type="match status" value="1"/>
</dbReference>
<dbReference type="PROSITE" id="PS00086">
    <property type="entry name" value="CYTOCHROME_P450"/>
    <property type="match status" value="1"/>
</dbReference>
<accession>M1KXD0</accession>
<sequence length="534" mass="59807">MEFISFVYTLIAFSSLLYFYLIWSESAKPKTTTHKAPPEASGAWPVIGHLRIMSGHPSAGIPHVNLGMLADKHGPIFSIRLGVHRVVVVSSPEVIKELFTTNDVAVSSRPSVKAGKHLAYDNAMLGFASYGAYWRQLRKIVSLELLSNRRLELQSHVSMSETGQFVKELYKLWEKKKSDGSGTEVGEGVVVDMKRWLGELNMNVVMRMVAGKRFGSGDNAEETKRCRRVMGDFFYLAGFFVPADALPYLGWLDLGGHEKRMKKAAKELDEVVGEWLAEHREREFSGEGKAQDFMDVMISVVKGADLQCEFDVDTIIKATCGTLIAGGTDTTAVVFVWALSLLLNHSHVLKKAQQELDKHVGKDRRVKESDLNNLIYLQAIVKETLRLYPPGPLAGTRRFTEDCVVGGYYIPKDTWLIVNLWKLQRDPRVWSDPLEFRPERFLAGDKTFDVKGQDFELIPFGAGRRICPGLSFGLQMLHLVLASLLQAFDMSTVSDEAVDMSESAGLTNMKATPLDVVVTPRLPPRLYNEIVEIY</sequence>